<gene>
    <name evidence="2" type="primary">NAAT1</name>
    <name type="ORF">GH24359</name>
</gene>
<keyword id="KW-0029">Amino-acid transport</keyword>
<keyword id="KW-0325">Glycoprotein</keyword>
<keyword id="KW-0406">Ion transport</keyword>
<keyword id="KW-0472">Membrane</keyword>
<keyword id="KW-1185">Reference proteome</keyword>
<keyword id="KW-0915">Sodium</keyword>
<keyword id="KW-0739">Sodium transport</keyword>
<keyword id="KW-0769">Symport</keyword>
<keyword id="KW-0812">Transmembrane</keyword>
<keyword id="KW-1133">Transmembrane helix</keyword>
<keyword id="KW-0813">Transport</keyword>
<sequence length="636" mass="71119">MELKTMPQNGANNGNPQGNTSNNNNTNDSSNSNSNNNNKTERTNWSNGLEFLMSCISVSVGLGNIWRFPFTAYENGGGAFLIPYIIVLFMIGKPMYYLEMIMGQFTSQGTVKIWSICPSFLGVGYGQAFGTICIISYYSSLLALTLYYLAVSFQADLPWSTCRDTWINCVNSRPAEYIETMMTNGSSALTRATDTPAKLQSSSELYFLDVVINEKTDISDGVGNPDWKLTIALFVSWIVIFLVIMRGVKSSGKAAYFLALFPYVVLFTLLGRAVTLEGAVDGIIFFLEPQWGELLNPTVWKEAVVQCFFSLAVGSGPIIMFSSYNRFDHPIYRDAMIVTTLDTLTSLLGGITIFAILGNLAHNLKVENIRDVVRSGTGLAFISYPDAISKFNAVPQLFSALFFFMLFVLGIGSIVALQSTIVTIICDQFKWKYWKVALVTSICGFLMGLVYVTPGGQWILTLVDFYGGTYVVFILAIFELVGIAWIYGVSNFCDDIEFMSNKRVSLYWRACWLIFTPIMMIVIFIYSMVTITPIKYSDIYFPVAGDVAGWLLFAIGASQFPLWGWWYVHNHRTGSIAKSFVDSLKPSQKWGPADPETRRNWLLFKSDLAAKRAVQAKSDKMGFFRQKLYNMCGRST</sequence>
<protein>
    <recommendedName>
        <fullName evidence="2">Sodium-dependent nutrient amino acid transporter 1</fullName>
    </recommendedName>
</protein>
<name>NAAT1_DROGR</name>
<feature type="chain" id="PRO_0000386583" description="Sodium-dependent nutrient amino acid transporter 1">
    <location>
        <begin position="1"/>
        <end position="636"/>
    </location>
</feature>
<feature type="topological domain" description="Cytoplasmic" evidence="3">
    <location>
        <begin position="1"/>
        <end position="50"/>
    </location>
</feature>
<feature type="transmembrane region" description="Helical; Name=1" evidence="3">
    <location>
        <begin position="51"/>
        <end position="71"/>
    </location>
</feature>
<feature type="transmembrane region" description="Helical; Name=2" evidence="3">
    <location>
        <begin position="78"/>
        <end position="98"/>
    </location>
</feature>
<feature type="transmembrane region" description="Helical; Name=3" evidence="3">
    <location>
        <begin position="131"/>
        <end position="151"/>
    </location>
</feature>
<feature type="transmembrane region" description="Helical; Name=4" evidence="3">
    <location>
        <begin position="225"/>
        <end position="245"/>
    </location>
</feature>
<feature type="transmembrane region" description="Helical; Name=5" evidence="3">
    <location>
        <begin position="254"/>
        <end position="274"/>
    </location>
</feature>
<feature type="transmembrane region" description="Helical; Name=6" evidence="3">
    <location>
        <begin position="303"/>
        <end position="323"/>
    </location>
</feature>
<feature type="transmembrane region" description="Helical; Name=7" evidence="3">
    <location>
        <begin position="337"/>
        <end position="357"/>
    </location>
</feature>
<feature type="transmembrane region" description="Helical; Name=8" evidence="3">
    <location>
        <begin position="397"/>
        <end position="417"/>
    </location>
</feature>
<feature type="transmembrane region" description="Helical; Name=9" evidence="3">
    <location>
        <begin position="436"/>
        <end position="456"/>
    </location>
</feature>
<feature type="transmembrane region" description="Helical; Name=10" evidence="3">
    <location>
        <begin position="469"/>
        <end position="489"/>
    </location>
</feature>
<feature type="transmembrane region" description="Helical; Name=11" evidence="3">
    <location>
        <begin position="511"/>
        <end position="531"/>
    </location>
</feature>
<feature type="transmembrane region" description="Helical; Name=12" evidence="3">
    <location>
        <begin position="547"/>
        <end position="567"/>
    </location>
</feature>
<feature type="region of interest" description="Disordered" evidence="4">
    <location>
        <begin position="1"/>
        <end position="40"/>
    </location>
</feature>
<feature type="compositionally biased region" description="Low complexity" evidence="4">
    <location>
        <begin position="7"/>
        <end position="40"/>
    </location>
</feature>
<feature type="glycosylation site" description="N-linked (GlcNAc...) asparagine" evidence="3">
    <location>
        <position position="184"/>
    </location>
</feature>
<comment type="function">
    <text evidence="1">Unusual broad substrate spectrum amino acid:sodium cotransporter that promotes absorption of the D isomers of essential amino acids. Neutral amino acids are the preferred substrates, especially methionine and phenylalanine (By similarity).</text>
</comment>
<comment type="subcellular location">
    <subcellularLocation>
        <location evidence="5">Membrane</location>
        <topology evidence="5">Multi-pass membrane protein</topology>
    </subcellularLocation>
</comment>
<comment type="similarity">
    <text evidence="5">Belongs to the sodium:neurotransmitter symporter (SNF) (TC 2.A.22) family.</text>
</comment>
<comment type="sequence caution" evidence="5">
    <conflict type="erroneous gene model prediction">
        <sequence resource="EMBL-CDS" id="EDV91882"/>
    </conflict>
</comment>
<dbReference type="EMBL" id="CH916371">
    <property type="protein sequence ID" value="EDV91882.1"/>
    <property type="status" value="ALT_SEQ"/>
    <property type="molecule type" value="Genomic_DNA"/>
</dbReference>
<dbReference type="RefSeq" id="XP_001992175.1">
    <property type="nucleotide sequence ID" value="XM_001992139.1"/>
</dbReference>
<dbReference type="SMR" id="B4JMC1"/>
<dbReference type="FunCoup" id="B4JMC1">
    <property type="interactions" value="38"/>
</dbReference>
<dbReference type="GlyCosmos" id="B4JMC1">
    <property type="glycosylation" value="1 site, No reported glycans"/>
</dbReference>
<dbReference type="GeneID" id="6566079"/>
<dbReference type="KEGG" id="dgr:6566079"/>
<dbReference type="CTD" id="31457"/>
<dbReference type="eggNOG" id="KOG3660">
    <property type="taxonomic scope" value="Eukaryota"/>
</dbReference>
<dbReference type="InParanoid" id="B4JMC1"/>
<dbReference type="OrthoDB" id="6581954at2759"/>
<dbReference type="Proteomes" id="UP000001070">
    <property type="component" value="Unassembled WGS sequence"/>
</dbReference>
<dbReference type="GO" id="GO:0005886">
    <property type="term" value="C:plasma membrane"/>
    <property type="evidence" value="ECO:0000305"/>
    <property type="project" value="UniProtKB"/>
</dbReference>
<dbReference type="GO" id="GO:0005283">
    <property type="term" value="F:amino acid:sodium symporter activity"/>
    <property type="evidence" value="ECO:0000250"/>
    <property type="project" value="UniProtKB"/>
</dbReference>
<dbReference type="GO" id="GO:0042943">
    <property type="term" value="F:D-amino acid transmembrane transporter activity"/>
    <property type="evidence" value="ECO:0000250"/>
    <property type="project" value="UniProtKB"/>
</dbReference>
<dbReference type="GO" id="GO:0015179">
    <property type="term" value="F:L-amino acid transmembrane transporter activity"/>
    <property type="evidence" value="ECO:0007669"/>
    <property type="project" value="EnsemblMetazoa"/>
</dbReference>
<dbReference type="GO" id="GO:0015175">
    <property type="term" value="F:neutral L-amino acid transmembrane transporter activity"/>
    <property type="evidence" value="ECO:0000250"/>
    <property type="project" value="UniProtKB"/>
</dbReference>
<dbReference type="GO" id="GO:0089718">
    <property type="term" value="P:amino acid import across plasma membrane"/>
    <property type="evidence" value="ECO:0007669"/>
    <property type="project" value="TreeGrafter"/>
</dbReference>
<dbReference type="GO" id="GO:0042940">
    <property type="term" value="P:D-amino acid transport"/>
    <property type="evidence" value="ECO:0000250"/>
    <property type="project" value="UniProtKB"/>
</dbReference>
<dbReference type="GO" id="GO:0015804">
    <property type="term" value="P:neutral amino acid transport"/>
    <property type="evidence" value="ECO:0000250"/>
    <property type="project" value="UniProtKB"/>
</dbReference>
<dbReference type="GO" id="GO:0006814">
    <property type="term" value="P:sodium ion transport"/>
    <property type="evidence" value="ECO:0000250"/>
    <property type="project" value="UniProtKB"/>
</dbReference>
<dbReference type="CDD" id="cd10324">
    <property type="entry name" value="SLC6sbd"/>
    <property type="match status" value="1"/>
</dbReference>
<dbReference type="InterPro" id="IPR000175">
    <property type="entry name" value="Na/ntran_symport"/>
</dbReference>
<dbReference type="InterPro" id="IPR037272">
    <property type="entry name" value="SNS_sf"/>
</dbReference>
<dbReference type="NCBIfam" id="NF037979">
    <property type="entry name" value="Na_transp"/>
    <property type="match status" value="1"/>
</dbReference>
<dbReference type="PANTHER" id="PTHR11616:SF321">
    <property type="entry name" value="SODIUM-DEPENDENT NUTRIENT AMINO ACID TRANSPORTER 1-RELATED"/>
    <property type="match status" value="1"/>
</dbReference>
<dbReference type="PANTHER" id="PTHR11616">
    <property type="entry name" value="SODIUM/CHLORIDE DEPENDENT TRANSPORTER"/>
    <property type="match status" value="1"/>
</dbReference>
<dbReference type="Pfam" id="PF00209">
    <property type="entry name" value="SNF"/>
    <property type="match status" value="1"/>
</dbReference>
<dbReference type="PRINTS" id="PR00176">
    <property type="entry name" value="NANEUSMPORT"/>
</dbReference>
<dbReference type="SUPFAM" id="SSF161070">
    <property type="entry name" value="SNF-like"/>
    <property type="match status" value="1"/>
</dbReference>
<dbReference type="PROSITE" id="PS00610">
    <property type="entry name" value="NA_NEUROTRAN_SYMP_1"/>
    <property type="match status" value="1"/>
</dbReference>
<dbReference type="PROSITE" id="PS50267">
    <property type="entry name" value="NA_NEUROTRAN_SYMP_3"/>
    <property type="match status" value="1"/>
</dbReference>
<organism>
    <name type="scientific">Drosophila grimshawi</name>
    <name type="common">Hawaiian fruit fly</name>
    <name type="synonym">Idiomyia grimshawi</name>
    <dbReference type="NCBI Taxonomy" id="7222"/>
    <lineage>
        <taxon>Eukaryota</taxon>
        <taxon>Metazoa</taxon>
        <taxon>Ecdysozoa</taxon>
        <taxon>Arthropoda</taxon>
        <taxon>Hexapoda</taxon>
        <taxon>Insecta</taxon>
        <taxon>Pterygota</taxon>
        <taxon>Neoptera</taxon>
        <taxon>Endopterygota</taxon>
        <taxon>Diptera</taxon>
        <taxon>Brachycera</taxon>
        <taxon>Muscomorpha</taxon>
        <taxon>Ephydroidea</taxon>
        <taxon>Drosophilidae</taxon>
        <taxon>Drosophila</taxon>
        <taxon>Hawaiian Drosophila</taxon>
    </lineage>
</organism>
<evidence type="ECO:0000250" key="1"/>
<evidence type="ECO:0000250" key="2">
    <source>
        <dbReference type="UniProtKB" id="Q9W4C5"/>
    </source>
</evidence>
<evidence type="ECO:0000255" key="3"/>
<evidence type="ECO:0000256" key="4">
    <source>
        <dbReference type="SAM" id="MobiDB-lite"/>
    </source>
</evidence>
<evidence type="ECO:0000305" key="5"/>
<evidence type="ECO:0000312" key="6">
    <source>
        <dbReference type="EMBL" id="EDV91882.1"/>
    </source>
</evidence>
<reference evidence="6" key="1">
    <citation type="journal article" date="2007" name="Nature">
        <title>Evolution of genes and genomes on the Drosophila phylogeny.</title>
        <authorList>
            <consortium name="Drosophila 12 genomes consortium"/>
        </authorList>
    </citation>
    <scope>NUCLEOTIDE SEQUENCE [LARGE SCALE GENOMIC DNA]</scope>
    <source>
        <strain evidence="6">Tucson 15287-2541.00</strain>
    </source>
</reference>
<proteinExistence type="inferred from homology"/>
<accession>B4JMC1</accession>